<sequence>MAKKVIAIIKIVLPAGKATPAPPVGPALGPYGVSSVNFCKEYNAKTADKGGLVIPAEITVYDDRSYSFVLKTPPASVLIAKAASVEKGSGEPNRKKVGSITKAQLEQIAKVKFPDLNTQNLEAASRIVEGTARNMGITITD</sequence>
<protein>
    <recommendedName>
        <fullName evidence="1">Large ribosomal subunit protein uL11c</fullName>
    </recommendedName>
    <alternativeName>
        <fullName evidence="2">50S ribosomal protein L11, cyanelle</fullName>
    </alternativeName>
</protein>
<geneLocation type="cyanelle"/>
<name>RK11_CYAPA</name>
<gene>
    <name evidence="1" type="primary">rpl11</name>
</gene>
<comment type="function">
    <text evidence="1">Forms part of the ribosomal stalk which helps the ribosome interact with GTP-bound translation factors.</text>
</comment>
<comment type="subunit">
    <text evidence="1">Part of the ribosomal stalk of the 50S ribosomal subunit. Interacts with L10 and the large rRNA to form the base of the stalk. L10 forms an elongated spine to which L12 dimers bind in a sequential fashion forming a multimeric L10(L12)X complex.</text>
</comment>
<comment type="subcellular location">
    <subcellularLocation>
        <location>Plastid</location>
        <location>Cyanelle</location>
    </subcellularLocation>
</comment>
<comment type="similarity">
    <text evidence="1">Belongs to the universal ribosomal protein uL11 family.</text>
</comment>
<organism>
    <name type="scientific">Cyanophora paradoxa</name>
    <dbReference type="NCBI Taxonomy" id="2762"/>
    <lineage>
        <taxon>Eukaryota</taxon>
        <taxon>Glaucocystophyceae</taxon>
        <taxon>Cyanophoraceae</taxon>
        <taxon>Cyanophora</taxon>
    </lineage>
</organism>
<feature type="chain" id="PRO_0000104421" description="Large ribosomal subunit protein uL11c">
    <location>
        <begin position="1"/>
        <end position="141"/>
    </location>
</feature>
<reference key="1">
    <citation type="journal article" date="1995" name="Plant Mol. Biol. Rep.">
        <title>Nucleotide sequence of the cyanelle DNA from Cyanophora paradoxa.</title>
        <authorList>
            <person name="Stirewalt V.L."/>
            <person name="Michalowski C.B."/>
            <person name="Loeffelhardt W."/>
            <person name="Bohnert H.J."/>
            <person name="Bryant D.A."/>
        </authorList>
    </citation>
    <scope>NUCLEOTIDE SEQUENCE [LARGE SCALE GENOMIC DNA]</scope>
    <source>
        <strain>UTEX LB 555 / Pringsheim</strain>
    </source>
</reference>
<reference key="2">
    <citation type="book" date="1997" name="Eukaryotism and symbiosis">
        <title>The complete sequence of the cyanelle genome of Cyanophora paradoxa: the genetic complexity of a primitive plastid.</title>
        <editorList>
            <person name="Schenk H.E.A."/>
            <person name="Herrmann R."/>
            <person name="Jeon K.W."/>
            <person name="Mueller N.E."/>
            <person name="Schwemmler W."/>
        </editorList>
        <authorList>
            <person name="Loeffelhardt W."/>
            <person name="Stirewalt V.L."/>
            <person name="Michalowski C.B."/>
            <person name="Annarella M."/>
            <person name="Farley J.Y."/>
            <person name="Schluchter W.M."/>
            <person name="Chung S."/>
            <person name="Newmann-Spallart C."/>
            <person name="Steiner J.M."/>
            <person name="Jakowitsch J."/>
            <person name="Bohnert H.J."/>
            <person name="Bryant D.A."/>
        </authorList>
    </citation>
    <scope>NUCLEOTIDE SEQUENCE [LARGE SCALE GENOMIC DNA]</scope>
    <source>
        <strain>UTEX LB 555 / Pringsheim</strain>
    </source>
</reference>
<evidence type="ECO:0000255" key="1">
    <source>
        <dbReference type="HAMAP-Rule" id="MF_00736"/>
    </source>
</evidence>
<evidence type="ECO:0000305" key="2"/>
<proteinExistence type="inferred from homology"/>
<accession>P48126</accession>
<keyword id="KW-0194">Cyanelle</keyword>
<keyword id="KW-0934">Plastid</keyword>
<keyword id="KW-0687">Ribonucleoprotein</keyword>
<keyword id="KW-0689">Ribosomal protein</keyword>
<keyword id="KW-0694">RNA-binding</keyword>
<keyword id="KW-0699">rRNA-binding</keyword>
<dbReference type="EMBL" id="U30821">
    <property type="protein sequence ID" value="AAA81202.1"/>
    <property type="molecule type" value="Genomic_DNA"/>
</dbReference>
<dbReference type="PIR" id="T06859">
    <property type="entry name" value="T06859"/>
</dbReference>
<dbReference type="RefSeq" id="NP_043171.1">
    <property type="nucleotide sequence ID" value="NC_001675.1"/>
</dbReference>
<dbReference type="SMR" id="P48126"/>
<dbReference type="GeneID" id="801567"/>
<dbReference type="GO" id="GO:0009842">
    <property type="term" value="C:cyanelle"/>
    <property type="evidence" value="ECO:0007669"/>
    <property type="project" value="UniProtKB-SubCell"/>
</dbReference>
<dbReference type="GO" id="GO:0015934">
    <property type="term" value="C:large ribosomal subunit"/>
    <property type="evidence" value="ECO:0007669"/>
    <property type="project" value="TreeGrafter"/>
</dbReference>
<dbReference type="GO" id="GO:0070180">
    <property type="term" value="F:large ribosomal subunit rRNA binding"/>
    <property type="evidence" value="ECO:0007669"/>
    <property type="project" value="TreeGrafter"/>
</dbReference>
<dbReference type="GO" id="GO:0003735">
    <property type="term" value="F:structural constituent of ribosome"/>
    <property type="evidence" value="ECO:0007669"/>
    <property type="project" value="InterPro"/>
</dbReference>
<dbReference type="GO" id="GO:0006412">
    <property type="term" value="P:translation"/>
    <property type="evidence" value="ECO:0007669"/>
    <property type="project" value="InterPro"/>
</dbReference>
<dbReference type="CDD" id="cd00349">
    <property type="entry name" value="Ribosomal_L11"/>
    <property type="match status" value="1"/>
</dbReference>
<dbReference type="FunFam" id="1.10.10.250:FF:000001">
    <property type="entry name" value="50S ribosomal protein L11"/>
    <property type="match status" value="1"/>
</dbReference>
<dbReference type="FunFam" id="3.30.1550.10:FF:000005">
    <property type="entry name" value="50S ribosomal protein L11"/>
    <property type="match status" value="1"/>
</dbReference>
<dbReference type="Gene3D" id="1.10.10.250">
    <property type="entry name" value="Ribosomal protein L11, C-terminal domain"/>
    <property type="match status" value="1"/>
</dbReference>
<dbReference type="Gene3D" id="3.30.1550.10">
    <property type="entry name" value="Ribosomal protein L11/L12, N-terminal domain"/>
    <property type="match status" value="1"/>
</dbReference>
<dbReference type="HAMAP" id="MF_00736">
    <property type="entry name" value="Ribosomal_uL11"/>
    <property type="match status" value="1"/>
</dbReference>
<dbReference type="InterPro" id="IPR000911">
    <property type="entry name" value="Ribosomal_uL11"/>
</dbReference>
<dbReference type="InterPro" id="IPR006519">
    <property type="entry name" value="Ribosomal_uL11_bac-typ"/>
</dbReference>
<dbReference type="InterPro" id="IPR020783">
    <property type="entry name" value="Ribosomal_uL11_C"/>
</dbReference>
<dbReference type="InterPro" id="IPR036769">
    <property type="entry name" value="Ribosomal_uL11_C_sf"/>
</dbReference>
<dbReference type="InterPro" id="IPR020785">
    <property type="entry name" value="Ribosomal_uL11_CS"/>
</dbReference>
<dbReference type="InterPro" id="IPR020784">
    <property type="entry name" value="Ribosomal_uL11_N"/>
</dbReference>
<dbReference type="InterPro" id="IPR036796">
    <property type="entry name" value="Ribosomal_uL11_N_sf"/>
</dbReference>
<dbReference type="NCBIfam" id="TIGR01632">
    <property type="entry name" value="L11_bact"/>
    <property type="match status" value="1"/>
</dbReference>
<dbReference type="PANTHER" id="PTHR11661">
    <property type="entry name" value="60S RIBOSOMAL PROTEIN L12"/>
    <property type="match status" value="1"/>
</dbReference>
<dbReference type="PANTHER" id="PTHR11661:SF1">
    <property type="entry name" value="LARGE RIBOSOMAL SUBUNIT PROTEIN UL11M"/>
    <property type="match status" value="1"/>
</dbReference>
<dbReference type="Pfam" id="PF00298">
    <property type="entry name" value="Ribosomal_L11"/>
    <property type="match status" value="1"/>
</dbReference>
<dbReference type="Pfam" id="PF03946">
    <property type="entry name" value="Ribosomal_L11_N"/>
    <property type="match status" value="1"/>
</dbReference>
<dbReference type="SMART" id="SM00649">
    <property type="entry name" value="RL11"/>
    <property type="match status" value="1"/>
</dbReference>
<dbReference type="SUPFAM" id="SSF54747">
    <property type="entry name" value="Ribosomal L11/L12e N-terminal domain"/>
    <property type="match status" value="1"/>
</dbReference>
<dbReference type="SUPFAM" id="SSF46906">
    <property type="entry name" value="Ribosomal protein L11, C-terminal domain"/>
    <property type="match status" value="1"/>
</dbReference>
<dbReference type="PROSITE" id="PS00359">
    <property type="entry name" value="RIBOSOMAL_L11"/>
    <property type="match status" value="1"/>
</dbReference>